<name>ATPG_ROSS1</name>
<accession>A5UQN4</accession>
<sequence length="290" mass="32679">MPSTREIRRRIRSVKNLAQITRAMEMVSASKMRRAQRNVLATRPYADRLLDVMGELTGRAVGMRRGTLLEVRPVVQGVALIVVTPDRGLAGSLVANVLRRASRFILDEQEKKHTVEVLAIGKKGRDFMVRTHQNLVAEVTKLGDHPRLTDILGISTHVINGFLGGRYDEVYVLYSQFVNTLVQRPTIKRLLPIDPPHEPAERMVDYTYEPSQEEVLRELLPRFVEVQLYQAVLEAIASEHSARMVAMRNATDNAKELQRDLTLSYNKTRQANITKEVSEIASGAAALAEM</sequence>
<dbReference type="EMBL" id="CP000686">
    <property type="protein sequence ID" value="ABQ88937.1"/>
    <property type="molecule type" value="Genomic_DNA"/>
</dbReference>
<dbReference type="RefSeq" id="WP_011955294.1">
    <property type="nucleotide sequence ID" value="NC_009523.1"/>
</dbReference>
<dbReference type="SMR" id="A5UQN4"/>
<dbReference type="STRING" id="357808.RoseRS_0513"/>
<dbReference type="KEGG" id="rrs:RoseRS_0513"/>
<dbReference type="eggNOG" id="COG0224">
    <property type="taxonomic scope" value="Bacteria"/>
</dbReference>
<dbReference type="HOGENOM" id="CLU_050669_0_1_0"/>
<dbReference type="OrthoDB" id="9812769at2"/>
<dbReference type="Proteomes" id="UP000006554">
    <property type="component" value="Chromosome"/>
</dbReference>
<dbReference type="GO" id="GO:0005886">
    <property type="term" value="C:plasma membrane"/>
    <property type="evidence" value="ECO:0007669"/>
    <property type="project" value="UniProtKB-SubCell"/>
</dbReference>
<dbReference type="GO" id="GO:0045259">
    <property type="term" value="C:proton-transporting ATP synthase complex"/>
    <property type="evidence" value="ECO:0007669"/>
    <property type="project" value="UniProtKB-KW"/>
</dbReference>
<dbReference type="GO" id="GO:0005524">
    <property type="term" value="F:ATP binding"/>
    <property type="evidence" value="ECO:0007669"/>
    <property type="project" value="UniProtKB-UniRule"/>
</dbReference>
<dbReference type="GO" id="GO:0046933">
    <property type="term" value="F:proton-transporting ATP synthase activity, rotational mechanism"/>
    <property type="evidence" value="ECO:0007669"/>
    <property type="project" value="UniProtKB-UniRule"/>
</dbReference>
<dbReference type="GO" id="GO:0042777">
    <property type="term" value="P:proton motive force-driven plasma membrane ATP synthesis"/>
    <property type="evidence" value="ECO:0007669"/>
    <property type="project" value="UniProtKB-UniRule"/>
</dbReference>
<dbReference type="CDD" id="cd12151">
    <property type="entry name" value="F1-ATPase_gamma"/>
    <property type="match status" value="1"/>
</dbReference>
<dbReference type="Gene3D" id="3.40.1380.10">
    <property type="match status" value="1"/>
</dbReference>
<dbReference type="Gene3D" id="1.10.287.80">
    <property type="entry name" value="ATP synthase, gamma subunit, helix hairpin domain"/>
    <property type="match status" value="2"/>
</dbReference>
<dbReference type="HAMAP" id="MF_00815">
    <property type="entry name" value="ATP_synth_gamma_bact"/>
    <property type="match status" value="1"/>
</dbReference>
<dbReference type="InterPro" id="IPR035968">
    <property type="entry name" value="ATP_synth_F1_ATPase_gsu"/>
</dbReference>
<dbReference type="InterPro" id="IPR000131">
    <property type="entry name" value="ATP_synth_F1_gsu"/>
</dbReference>
<dbReference type="InterPro" id="IPR023632">
    <property type="entry name" value="ATP_synth_F1_gsu_CS"/>
</dbReference>
<dbReference type="NCBIfam" id="TIGR01146">
    <property type="entry name" value="ATPsyn_F1gamma"/>
    <property type="match status" value="1"/>
</dbReference>
<dbReference type="NCBIfam" id="NF010709">
    <property type="entry name" value="PRK14111.1"/>
    <property type="match status" value="1"/>
</dbReference>
<dbReference type="PANTHER" id="PTHR11693">
    <property type="entry name" value="ATP SYNTHASE GAMMA CHAIN"/>
    <property type="match status" value="1"/>
</dbReference>
<dbReference type="PANTHER" id="PTHR11693:SF22">
    <property type="entry name" value="ATP SYNTHASE SUBUNIT GAMMA, MITOCHONDRIAL"/>
    <property type="match status" value="1"/>
</dbReference>
<dbReference type="Pfam" id="PF00231">
    <property type="entry name" value="ATP-synt"/>
    <property type="match status" value="1"/>
</dbReference>
<dbReference type="PRINTS" id="PR00126">
    <property type="entry name" value="ATPASEGAMMA"/>
</dbReference>
<dbReference type="SUPFAM" id="SSF52943">
    <property type="entry name" value="ATP synthase (F1-ATPase), gamma subunit"/>
    <property type="match status" value="1"/>
</dbReference>
<dbReference type="PROSITE" id="PS00153">
    <property type="entry name" value="ATPASE_GAMMA"/>
    <property type="match status" value="1"/>
</dbReference>
<organism>
    <name type="scientific">Roseiflexus sp. (strain RS-1)</name>
    <dbReference type="NCBI Taxonomy" id="357808"/>
    <lineage>
        <taxon>Bacteria</taxon>
        <taxon>Bacillati</taxon>
        <taxon>Chloroflexota</taxon>
        <taxon>Chloroflexia</taxon>
        <taxon>Chloroflexales</taxon>
        <taxon>Roseiflexineae</taxon>
        <taxon>Roseiflexaceae</taxon>
        <taxon>Roseiflexus</taxon>
    </lineage>
</organism>
<comment type="function">
    <text evidence="1">Produces ATP from ADP in the presence of a proton gradient across the membrane. The gamma chain is believed to be important in regulating ATPase activity and the flow of protons through the CF(0) complex.</text>
</comment>
<comment type="subunit">
    <text evidence="1">F-type ATPases have 2 components, CF(1) - the catalytic core - and CF(0) - the membrane proton channel. CF(1) has five subunits: alpha(3), beta(3), gamma(1), delta(1), epsilon(1). CF(0) has three main subunits: a, b and c.</text>
</comment>
<comment type="subcellular location">
    <subcellularLocation>
        <location evidence="1">Cell membrane</location>
        <topology evidence="1">Peripheral membrane protein</topology>
    </subcellularLocation>
</comment>
<comment type="similarity">
    <text evidence="1">Belongs to the ATPase gamma chain family.</text>
</comment>
<evidence type="ECO:0000255" key="1">
    <source>
        <dbReference type="HAMAP-Rule" id="MF_00815"/>
    </source>
</evidence>
<reference key="1">
    <citation type="submission" date="2007-04" db="EMBL/GenBank/DDBJ databases">
        <title>Complete sequence of Roseiflexus sp. RS-1.</title>
        <authorList>
            <consortium name="US DOE Joint Genome Institute"/>
            <person name="Copeland A."/>
            <person name="Lucas S."/>
            <person name="Lapidus A."/>
            <person name="Barry K."/>
            <person name="Detter J.C."/>
            <person name="Glavina del Rio T."/>
            <person name="Hammon N."/>
            <person name="Israni S."/>
            <person name="Dalin E."/>
            <person name="Tice H."/>
            <person name="Pitluck S."/>
            <person name="Chertkov O."/>
            <person name="Brettin T."/>
            <person name="Bruce D."/>
            <person name="Han C."/>
            <person name="Schmutz J."/>
            <person name="Larimer F."/>
            <person name="Land M."/>
            <person name="Hauser L."/>
            <person name="Kyrpides N."/>
            <person name="Mikhailova N."/>
            <person name="Bryant D.A."/>
            <person name="Richardson P."/>
        </authorList>
    </citation>
    <scope>NUCLEOTIDE SEQUENCE [LARGE SCALE GENOMIC DNA]</scope>
    <source>
        <strain>RS-1</strain>
    </source>
</reference>
<keyword id="KW-0066">ATP synthesis</keyword>
<keyword id="KW-1003">Cell membrane</keyword>
<keyword id="KW-0139">CF(1)</keyword>
<keyword id="KW-0375">Hydrogen ion transport</keyword>
<keyword id="KW-0406">Ion transport</keyword>
<keyword id="KW-0472">Membrane</keyword>
<keyword id="KW-0813">Transport</keyword>
<gene>
    <name evidence="1" type="primary">atpG</name>
    <name type="ordered locus">RoseRS_0513</name>
</gene>
<protein>
    <recommendedName>
        <fullName evidence="1">ATP synthase gamma chain</fullName>
    </recommendedName>
    <alternativeName>
        <fullName evidence="1">ATP synthase F1 sector gamma subunit</fullName>
    </alternativeName>
    <alternativeName>
        <fullName evidence="1">F-ATPase gamma subunit</fullName>
    </alternativeName>
</protein>
<proteinExistence type="inferred from homology"/>
<feature type="chain" id="PRO_1000053318" description="ATP synthase gamma chain">
    <location>
        <begin position="1"/>
        <end position="290"/>
    </location>
</feature>